<sequence>MNSTPDTFQRPALRELTPLEARVLGVLIEKQHTVPDTYPLSLNALTAGCNQKTARSPVMNVSEAEVLTAIDGLKRLSLASEGSSSRVPRFEHNMNRVLGIPSQAAALLTMLLLRGPQTAAELRLNSARLHGFADISSVEAFLDELAARTPPLVVKLPRAPGARESRWMHLMCGDVAPDEAPAHGAHEDAVPPSEFEALKAEQKALTAELAQLRALVEYMANELGIDVGKLTRGV</sequence>
<organism>
    <name type="scientific">Burkholderia pseudomallei (strain 1106a)</name>
    <dbReference type="NCBI Taxonomy" id="357348"/>
    <lineage>
        <taxon>Bacteria</taxon>
        <taxon>Pseudomonadati</taxon>
        <taxon>Pseudomonadota</taxon>
        <taxon>Betaproteobacteria</taxon>
        <taxon>Burkholderiales</taxon>
        <taxon>Burkholderiaceae</taxon>
        <taxon>Burkholderia</taxon>
        <taxon>pseudomallei group</taxon>
    </lineage>
</organism>
<name>Y5966_BURP0</name>
<feature type="chain" id="PRO_0000309376" description="UPF0502 protein BURPS1106A_A1866">
    <location>
        <begin position="1"/>
        <end position="234"/>
    </location>
</feature>
<gene>
    <name type="ordered locus">BURPS1106A_A1866</name>
</gene>
<proteinExistence type="inferred from homology"/>
<evidence type="ECO:0000255" key="1">
    <source>
        <dbReference type="HAMAP-Rule" id="MF_01584"/>
    </source>
</evidence>
<protein>
    <recommendedName>
        <fullName evidence="1">UPF0502 protein BURPS1106A_A1866</fullName>
    </recommendedName>
</protein>
<comment type="similarity">
    <text evidence="1">Belongs to the UPF0502 family.</text>
</comment>
<reference key="1">
    <citation type="journal article" date="2010" name="Genome Biol. Evol.">
        <title>Continuing evolution of Burkholderia mallei through genome reduction and large-scale rearrangements.</title>
        <authorList>
            <person name="Losada L."/>
            <person name="Ronning C.M."/>
            <person name="DeShazer D."/>
            <person name="Woods D."/>
            <person name="Fedorova N."/>
            <person name="Kim H.S."/>
            <person name="Shabalina S.A."/>
            <person name="Pearson T.R."/>
            <person name="Brinkac L."/>
            <person name="Tan P."/>
            <person name="Nandi T."/>
            <person name="Crabtree J."/>
            <person name="Badger J."/>
            <person name="Beckstrom-Sternberg S."/>
            <person name="Saqib M."/>
            <person name="Schutzer S.E."/>
            <person name="Keim P."/>
            <person name="Nierman W.C."/>
        </authorList>
    </citation>
    <scope>NUCLEOTIDE SEQUENCE [LARGE SCALE GENOMIC DNA]</scope>
    <source>
        <strain>1106a</strain>
    </source>
</reference>
<dbReference type="EMBL" id="CP000573">
    <property type="protein sequence ID" value="ABN92768.1"/>
    <property type="molecule type" value="Genomic_DNA"/>
</dbReference>
<dbReference type="RefSeq" id="WP_004528683.1">
    <property type="nucleotide sequence ID" value="NC_009078.1"/>
</dbReference>
<dbReference type="SMR" id="A3P6E0"/>
<dbReference type="KEGG" id="bpl:BURPS1106A_A1866"/>
<dbReference type="HOGENOM" id="CLU_057831_0_0_4"/>
<dbReference type="Proteomes" id="UP000006738">
    <property type="component" value="Chromosome II"/>
</dbReference>
<dbReference type="Gene3D" id="1.10.10.10">
    <property type="entry name" value="Winged helix-like DNA-binding domain superfamily/Winged helix DNA-binding domain"/>
    <property type="match status" value="2"/>
</dbReference>
<dbReference type="HAMAP" id="MF_01584">
    <property type="entry name" value="UPF0502"/>
    <property type="match status" value="1"/>
</dbReference>
<dbReference type="InterPro" id="IPR007432">
    <property type="entry name" value="DUF480"/>
</dbReference>
<dbReference type="InterPro" id="IPR036388">
    <property type="entry name" value="WH-like_DNA-bd_sf"/>
</dbReference>
<dbReference type="InterPro" id="IPR036390">
    <property type="entry name" value="WH_DNA-bd_sf"/>
</dbReference>
<dbReference type="PANTHER" id="PTHR38768">
    <property type="entry name" value="UPF0502 PROTEIN YCEH"/>
    <property type="match status" value="1"/>
</dbReference>
<dbReference type="PANTHER" id="PTHR38768:SF1">
    <property type="entry name" value="UPF0502 PROTEIN YCEH"/>
    <property type="match status" value="1"/>
</dbReference>
<dbReference type="Pfam" id="PF04337">
    <property type="entry name" value="DUF480"/>
    <property type="match status" value="1"/>
</dbReference>
<dbReference type="SUPFAM" id="SSF46785">
    <property type="entry name" value="Winged helix' DNA-binding domain"/>
    <property type="match status" value="2"/>
</dbReference>
<accession>A3P6E0</accession>